<accession>P01992</accession>
<protein>
    <recommendedName>
        <fullName>Hemoglobin subunit alpha-A</fullName>
    </recommendedName>
    <alternativeName>
        <fullName>Alpha-A-globin</fullName>
    </alternativeName>
    <alternativeName>
        <fullName>Hemoglobin alpha-A chain</fullName>
    </alternativeName>
</protein>
<gene>
    <name type="primary">HBAA</name>
</gene>
<reference key="1">
    <citation type="journal article" date="1982" name="Hoppe-Seyler's Z. Physiol. Chem.">
        <title>The amino acid sequence of Canada goose (Branta canadensis) and mute swan (Cygnus olor) hemoglobins. Two different species with identical beta-chains.</title>
        <authorList>
            <person name="Oberthur W."/>
            <person name="Godovac-Zimmermann J."/>
            <person name="Braunitzer G."/>
        </authorList>
    </citation>
    <scope>PROTEIN SEQUENCE</scope>
</reference>
<dbReference type="PIR" id="A02313">
    <property type="entry name" value="HAWS"/>
</dbReference>
<dbReference type="SMR" id="P01992"/>
<dbReference type="GO" id="GO:0072562">
    <property type="term" value="C:blood microparticle"/>
    <property type="evidence" value="ECO:0007669"/>
    <property type="project" value="TreeGrafter"/>
</dbReference>
<dbReference type="GO" id="GO:0031838">
    <property type="term" value="C:haptoglobin-hemoglobin complex"/>
    <property type="evidence" value="ECO:0007669"/>
    <property type="project" value="TreeGrafter"/>
</dbReference>
<dbReference type="GO" id="GO:0005833">
    <property type="term" value="C:hemoglobin complex"/>
    <property type="evidence" value="ECO:0007669"/>
    <property type="project" value="InterPro"/>
</dbReference>
<dbReference type="GO" id="GO:0031720">
    <property type="term" value="F:haptoglobin binding"/>
    <property type="evidence" value="ECO:0007669"/>
    <property type="project" value="TreeGrafter"/>
</dbReference>
<dbReference type="GO" id="GO:0020037">
    <property type="term" value="F:heme binding"/>
    <property type="evidence" value="ECO:0007669"/>
    <property type="project" value="InterPro"/>
</dbReference>
<dbReference type="GO" id="GO:0005506">
    <property type="term" value="F:iron ion binding"/>
    <property type="evidence" value="ECO:0007669"/>
    <property type="project" value="InterPro"/>
</dbReference>
<dbReference type="GO" id="GO:0043177">
    <property type="term" value="F:organic acid binding"/>
    <property type="evidence" value="ECO:0007669"/>
    <property type="project" value="TreeGrafter"/>
</dbReference>
<dbReference type="GO" id="GO:0019825">
    <property type="term" value="F:oxygen binding"/>
    <property type="evidence" value="ECO:0007669"/>
    <property type="project" value="InterPro"/>
</dbReference>
<dbReference type="GO" id="GO:0005344">
    <property type="term" value="F:oxygen carrier activity"/>
    <property type="evidence" value="ECO:0007669"/>
    <property type="project" value="UniProtKB-KW"/>
</dbReference>
<dbReference type="GO" id="GO:0004601">
    <property type="term" value="F:peroxidase activity"/>
    <property type="evidence" value="ECO:0007669"/>
    <property type="project" value="TreeGrafter"/>
</dbReference>
<dbReference type="GO" id="GO:0042744">
    <property type="term" value="P:hydrogen peroxide catabolic process"/>
    <property type="evidence" value="ECO:0007669"/>
    <property type="project" value="TreeGrafter"/>
</dbReference>
<dbReference type="CDD" id="cd08927">
    <property type="entry name" value="Hb-alpha-like"/>
    <property type="match status" value="1"/>
</dbReference>
<dbReference type="FunFam" id="1.10.490.10:FF:000002">
    <property type="entry name" value="Hemoglobin subunit alpha"/>
    <property type="match status" value="1"/>
</dbReference>
<dbReference type="Gene3D" id="1.10.490.10">
    <property type="entry name" value="Globins"/>
    <property type="match status" value="1"/>
</dbReference>
<dbReference type="InterPro" id="IPR000971">
    <property type="entry name" value="Globin"/>
</dbReference>
<dbReference type="InterPro" id="IPR009050">
    <property type="entry name" value="Globin-like_sf"/>
</dbReference>
<dbReference type="InterPro" id="IPR012292">
    <property type="entry name" value="Globin/Proto"/>
</dbReference>
<dbReference type="InterPro" id="IPR002338">
    <property type="entry name" value="Hemoglobin_a-typ"/>
</dbReference>
<dbReference type="InterPro" id="IPR050056">
    <property type="entry name" value="Hemoglobin_oxygen_transport"/>
</dbReference>
<dbReference type="InterPro" id="IPR002339">
    <property type="entry name" value="Hemoglobin_pi"/>
</dbReference>
<dbReference type="PANTHER" id="PTHR11442">
    <property type="entry name" value="HEMOGLOBIN FAMILY MEMBER"/>
    <property type="match status" value="1"/>
</dbReference>
<dbReference type="PANTHER" id="PTHR11442:SF48">
    <property type="entry name" value="HEMOGLOBIN SUBUNIT ALPHA"/>
    <property type="match status" value="1"/>
</dbReference>
<dbReference type="Pfam" id="PF00042">
    <property type="entry name" value="Globin"/>
    <property type="match status" value="1"/>
</dbReference>
<dbReference type="PRINTS" id="PR00612">
    <property type="entry name" value="ALPHAHAEM"/>
</dbReference>
<dbReference type="PRINTS" id="PR00815">
    <property type="entry name" value="PIHAEM"/>
</dbReference>
<dbReference type="SUPFAM" id="SSF46458">
    <property type="entry name" value="Globin-like"/>
    <property type="match status" value="1"/>
</dbReference>
<dbReference type="PROSITE" id="PS01033">
    <property type="entry name" value="GLOBIN"/>
    <property type="match status" value="1"/>
</dbReference>
<name>HBA_CYGOL</name>
<feature type="chain" id="PRO_0000052613" description="Hemoglobin subunit alpha-A">
    <location>
        <begin position="1"/>
        <end position="141"/>
    </location>
</feature>
<feature type="domain" description="Globin" evidence="1">
    <location>
        <begin position="1"/>
        <end position="141"/>
    </location>
</feature>
<feature type="binding site" evidence="1">
    <location>
        <position position="58"/>
    </location>
    <ligand>
        <name>O2</name>
        <dbReference type="ChEBI" id="CHEBI:15379"/>
    </ligand>
</feature>
<feature type="binding site" description="proximal binding residue" evidence="1">
    <location>
        <position position="87"/>
    </location>
    <ligand>
        <name>heme b</name>
        <dbReference type="ChEBI" id="CHEBI:60344"/>
    </ligand>
    <ligandPart>
        <name>Fe</name>
        <dbReference type="ChEBI" id="CHEBI:18248"/>
    </ligandPart>
</feature>
<organism>
    <name type="scientific">Cygnus olor</name>
    <name type="common">Mute swan</name>
    <name type="synonym">Anas olor</name>
    <dbReference type="NCBI Taxonomy" id="8869"/>
    <lineage>
        <taxon>Eukaryota</taxon>
        <taxon>Metazoa</taxon>
        <taxon>Chordata</taxon>
        <taxon>Craniata</taxon>
        <taxon>Vertebrata</taxon>
        <taxon>Euteleostomi</taxon>
        <taxon>Archelosauria</taxon>
        <taxon>Archosauria</taxon>
        <taxon>Dinosauria</taxon>
        <taxon>Saurischia</taxon>
        <taxon>Theropoda</taxon>
        <taxon>Coelurosauria</taxon>
        <taxon>Aves</taxon>
        <taxon>Neognathae</taxon>
        <taxon>Galloanserae</taxon>
        <taxon>Anseriformes</taxon>
        <taxon>Anatidae</taxon>
        <taxon>Anserinae</taxon>
        <taxon>Cygnus</taxon>
    </lineage>
</organism>
<evidence type="ECO:0000255" key="1">
    <source>
        <dbReference type="PROSITE-ProRule" id="PRU00238"/>
    </source>
</evidence>
<proteinExistence type="evidence at protein level"/>
<keyword id="KW-0903">Direct protein sequencing</keyword>
<keyword id="KW-0349">Heme</keyword>
<keyword id="KW-0408">Iron</keyword>
<keyword id="KW-0479">Metal-binding</keyword>
<keyword id="KW-0561">Oxygen transport</keyword>
<keyword id="KW-0813">Transport</keyword>
<comment type="function">
    <text>Involved in oxygen transport from the lung to the various peripheral tissues.</text>
</comment>
<comment type="subunit">
    <text>Heterotetramer of two alpha chains and two beta chains.</text>
</comment>
<comment type="tissue specificity">
    <text>Red blood cells.</text>
</comment>
<comment type="similarity">
    <text evidence="1">Belongs to the globin family.</text>
</comment>
<sequence length="141" mass="15259">VLSAADKTNVKGVFSKIGGHADDYGAETLERMFIAYPQTKTYFPHFDLQHGSAQIKAHGKKVAAALVEAVNHIDDIAGALSKLSDLHAQKLRVDPVNFKFLGHCFLVVVAIHHPSALTPEVHASLDKFLCAVGAVLTAKYR</sequence>